<proteinExistence type="inferred from homology"/>
<sequence>MERIRLKLKAYDHRVLDRTVAAIVEAVKRTGADIRGPIPMPTKIKRYTVLKSPHINKDSREQFEIRIHARMLDIVAATPDTVDSLTKLDLAPEVSVEVRAMGK</sequence>
<gene>
    <name evidence="1" type="primary">rpsJ</name>
    <name type="ordered locus">Cj1708c</name>
</gene>
<keyword id="KW-1185">Reference proteome</keyword>
<keyword id="KW-0687">Ribonucleoprotein</keyword>
<keyword id="KW-0689">Ribosomal protein</keyword>
<feature type="chain" id="PRO_0000146512" description="Small ribosomal subunit protein uS10">
    <location>
        <begin position="1"/>
        <end position="103"/>
    </location>
</feature>
<accession>Q9PLX0</accession>
<accession>Q0P7S3</accession>
<evidence type="ECO:0000255" key="1">
    <source>
        <dbReference type="HAMAP-Rule" id="MF_00508"/>
    </source>
</evidence>
<evidence type="ECO:0000305" key="2"/>
<reference key="1">
    <citation type="journal article" date="2000" name="Nature">
        <title>The genome sequence of the food-borne pathogen Campylobacter jejuni reveals hypervariable sequences.</title>
        <authorList>
            <person name="Parkhill J."/>
            <person name="Wren B.W."/>
            <person name="Mungall K.L."/>
            <person name="Ketley J.M."/>
            <person name="Churcher C.M."/>
            <person name="Basham D."/>
            <person name="Chillingworth T."/>
            <person name="Davies R.M."/>
            <person name="Feltwell T."/>
            <person name="Holroyd S."/>
            <person name="Jagels K."/>
            <person name="Karlyshev A.V."/>
            <person name="Moule S."/>
            <person name="Pallen M.J."/>
            <person name="Penn C.W."/>
            <person name="Quail M.A."/>
            <person name="Rajandream M.A."/>
            <person name="Rutherford K.M."/>
            <person name="van Vliet A.H.M."/>
            <person name="Whitehead S."/>
            <person name="Barrell B.G."/>
        </authorList>
    </citation>
    <scope>NUCLEOTIDE SEQUENCE [LARGE SCALE GENOMIC DNA]</scope>
    <source>
        <strain>ATCC 700819 / NCTC 11168</strain>
    </source>
</reference>
<name>RS10_CAMJE</name>
<organism>
    <name type="scientific">Campylobacter jejuni subsp. jejuni serotype O:2 (strain ATCC 700819 / NCTC 11168)</name>
    <dbReference type="NCBI Taxonomy" id="192222"/>
    <lineage>
        <taxon>Bacteria</taxon>
        <taxon>Pseudomonadati</taxon>
        <taxon>Campylobacterota</taxon>
        <taxon>Epsilonproteobacteria</taxon>
        <taxon>Campylobacterales</taxon>
        <taxon>Campylobacteraceae</taxon>
        <taxon>Campylobacter</taxon>
    </lineage>
</organism>
<protein>
    <recommendedName>
        <fullName evidence="1">Small ribosomal subunit protein uS10</fullName>
    </recommendedName>
    <alternativeName>
        <fullName evidence="2">30S ribosomal protein S10</fullName>
    </alternativeName>
</protein>
<dbReference type="EMBL" id="AL111168">
    <property type="protein sequence ID" value="CAL35802.1"/>
    <property type="molecule type" value="Genomic_DNA"/>
</dbReference>
<dbReference type="PIR" id="H81268">
    <property type="entry name" value="H81268"/>
</dbReference>
<dbReference type="RefSeq" id="WP_002779353.1">
    <property type="nucleotide sequence ID" value="NZ_SZUC01000002.1"/>
</dbReference>
<dbReference type="RefSeq" id="YP_002345074.1">
    <property type="nucleotide sequence ID" value="NC_002163.1"/>
</dbReference>
<dbReference type="SMR" id="Q9PLX0"/>
<dbReference type="IntAct" id="Q9PLX0">
    <property type="interactions" value="56"/>
</dbReference>
<dbReference type="STRING" id="192222.Cj1708c"/>
<dbReference type="PaxDb" id="192222-Cj1708c"/>
<dbReference type="EnsemblBacteria" id="CAL35802">
    <property type="protein sequence ID" value="CAL35802"/>
    <property type="gene ID" value="Cj1708c"/>
</dbReference>
<dbReference type="GeneID" id="905982"/>
<dbReference type="GeneID" id="98395699"/>
<dbReference type="KEGG" id="cje:Cj1708c"/>
<dbReference type="PATRIC" id="fig|192222.6.peg.1682"/>
<dbReference type="eggNOG" id="COG0051">
    <property type="taxonomic scope" value="Bacteria"/>
</dbReference>
<dbReference type="HOGENOM" id="CLU_122625_1_2_7"/>
<dbReference type="OrthoDB" id="9804464at2"/>
<dbReference type="PRO" id="PR:Q9PLX0"/>
<dbReference type="Proteomes" id="UP000000799">
    <property type="component" value="Chromosome"/>
</dbReference>
<dbReference type="GO" id="GO:1990904">
    <property type="term" value="C:ribonucleoprotein complex"/>
    <property type="evidence" value="ECO:0007669"/>
    <property type="project" value="UniProtKB-KW"/>
</dbReference>
<dbReference type="GO" id="GO:0005840">
    <property type="term" value="C:ribosome"/>
    <property type="evidence" value="ECO:0007669"/>
    <property type="project" value="UniProtKB-KW"/>
</dbReference>
<dbReference type="GO" id="GO:0003735">
    <property type="term" value="F:structural constituent of ribosome"/>
    <property type="evidence" value="ECO:0007669"/>
    <property type="project" value="InterPro"/>
</dbReference>
<dbReference type="GO" id="GO:0000049">
    <property type="term" value="F:tRNA binding"/>
    <property type="evidence" value="ECO:0007669"/>
    <property type="project" value="UniProtKB-UniRule"/>
</dbReference>
<dbReference type="GO" id="GO:0006412">
    <property type="term" value="P:translation"/>
    <property type="evidence" value="ECO:0007669"/>
    <property type="project" value="UniProtKB-UniRule"/>
</dbReference>
<dbReference type="FunFam" id="3.30.70.600:FF:000003">
    <property type="entry name" value="30S ribosomal protein S10"/>
    <property type="match status" value="1"/>
</dbReference>
<dbReference type="Gene3D" id="3.30.70.600">
    <property type="entry name" value="Ribosomal protein S10 domain"/>
    <property type="match status" value="1"/>
</dbReference>
<dbReference type="HAMAP" id="MF_00508">
    <property type="entry name" value="Ribosomal_uS10"/>
    <property type="match status" value="1"/>
</dbReference>
<dbReference type="InterPro" id="IPR001848">
    <property type="entry name" value="Ribosomal_uS10"/>
</dbReference>
<dbReference type="InterPro" id="IPR018268">
    <property type="entry name" value="Ribosomal_uS10_CS"/>
</dbReference>
<dbReference type="InterPro" id="IPR027486">
    <property type="entry name" value="Ribosomal_uS10_dom"/>
</dbReference>
<dbReference type="InterPro" id="IPR036838">
    <property type="entry name" value="Ribosomal_uS10_dom_sf"/>
</dbReference>
<dbReference type="NCBIfam" id="NF001861">
    <property type="entry name" value="PRK00596.1"/>
    <property type="match status" value="1"/>
</dbReference>
<dbReference type="NCBIfam" id="TIGR01049">
    <property type="entry name" value="rpsJ_bact"/>
    <property type="match status" value="1"/>
</dbReference>
<dbReference type="PANTHER" id="PTHR11700">
    <property type="entry name" value="30S RIBOSOMAL PROTEIN S10 FAMILY MEMBER"/>
    <property type="match status" value="1"/>
</dbReference>
<dbReference type="Pfam" id="PF00338">
    <property type="entry name" value="Ribosomal_S10"/>
    <property type="match status" value="1"/>
</dbReference>
<dbReference type="PRINTS" id="PR00971">
    <property type="entry name" value="RIBOSOMALS10"/>
</dbReference>
<dbReference type="SMART" id="SM01403">
    <property type="entry name" value="Ribosomal_S10"/>
    <property type="match status" value="1"/>
</dbReference>
<dbReference type="SUPFAM" id="SSF54999">
    <property type="entry name" value="Ribosomal protein S10"/>
    <property type="match status" value="1"/>
</dbReference>
<dbReference type="PROSITE" id="PS00361">
    <property type="entry name" value="RIBOSOMAL_S10"/>
    <property type="match status" value="1"/>
</dbReference>
<comment type="function">
    <text evidence="1">Involved in the binding of tRNA to the ribosomes.</text>
</comment>
<comment type="subunit">
    <text evidence="1">Part of the 30S ribosomal subunit.</text>
</comment>
<comment type="similarity">
    <text evidence="1">Belongs to the universal ribosomal protein uS10 family.</text>
</comment>